<sequence>MQTAARRSFDYDMPLIQTPTSACQIRQAWAKVADTPDRETADRLKDEIKALLKEKNAVLVAHYYVDPLIQDLALETGGCVGDSLEMARFGAEHEAGTLVVAGVRFMGESAKILCPEKTVLMPDLEAECSLDLGCPEEAFSAFCDQHPDRTVVVYANTSAAVKARADWVVTSSVALEIVSYLKSRGEKLIWGPDRHLGDYIRRETGADMLLWQGSCIVHNEFKGQELAALKAEHPDAVVLVHPESPQSVIELGDVVGSTSKLLKAAVSRPEKKFIVATDLGILHEMQKQAPDKEFIAAPTAGNGGSCKSCAFCPWMAMNSLGGIKYALTSGRNEILLDRKLGEAAKLPLQRMLDFAAGLKRGDVFNGMGPA</sequence>
<reference key="1">
    <citation type="journal article" date="2008" name="Genomics">
        <title>Characterization of ST-4821 complex, a unique Neisseria meningitidis clone.</title>
        <authorList>
            <person name="Peng J."/>
            <person name="Yang L."/>
            <person name="Yang F."/>
            <person name="Yang J."/>
            <person name="Yan Y."/>
            <person name="Nie H."/>
            <person name="Zhang X."/>
            <person name="Xiong Z."/>
            <person name="Jiang Y."/>
            <person name="Cheng F."/>
            <person name="Xu X."/>
            <person name="Chen S."/>
            <person name="Sun L."/>
            <person name="Li W."/>
            <person name="Shen Y."/>
            <person name="Shao Z."/>
            <person name="Liang X."/>
            <person name="Xu J."/>
            <person name="Jin Q."/>
        </authorList>
    </citation>
    <scope>NUCLEOTIDE SEQUENCE [LARGE SCALE GENOMIC DNA]</scope>
    <source>
        <strain>053442</strain>
    </source>
</reference>
<comment type="function">
    <text evidence="1">Catalyzes the condensation of iminoaspartate with dihydroxyacetone phosphate to form quinolinate.</text>
</comment>
<comment type="catalytic activity">
    <reaction evidence="1">
        <text>iminosuccinate + dihydroxyacetone phosphate = quinolinate + phosphate + 2 H2O + H(+)</text>
        <dbReference type="Rhea" id="RHEA:25888"/>
        <dbReference type="ChEBI" id="CHEBI:15377"/>
        <dbReference type="ChEBI" id="CHEBI:15378"/>
        <dbReference type="ChEBI" id="CHEBI:29959"/>
        <dbReference type="ChEBI" id="CHEBI:43474"/>
        <dbReference type="ChEBI" id="CHEBI:57642"/>
        <dbReference type="ChEBI" id="CHEBI:77875"/>
        <dbReference type="EC" id="2.5.1.72"/>
    </reaction>
    <physiologicalReaction direction="left-to-right" evidence="1">
        <dbReference type="Rhea" id="RHEA:25889"/>
    </physiologicalReaction>
</comment>
<comment type="cofactor">
    <cofactor evidence="1">
        <name>[4Fe-4S] cluster</name>
        <dbReference type="ChEBI" id="CHEBI:49883"/>
    </cofactor>
    <text evidence="1">Binds 1 [4Fe-4S] cluster per subunit.</text>
</comment>
<comment type="pathway">
    <text evidence="1">Cofactor biosynthesis; NAD(+) biosynthesis; quinolinate from iminoaspartate: step 1/1.</text>
</comment>
<comment type="subcellular location">
    <subcellularLocation>
        <location evidence="1">Cytoplasm</location>
    </subcellularLocation>
</comment>
<comment type="similarity">
    <text evidence="1">Belongs to the quinolinate synthase family. Type 1 subfamily.</text>
</comment>
<keyword id="KW-0004">4Fe-4S</keyword>
<keyword id="KW-0963">Cytoplasm</keyword>
<keyword id="KW-0408">Iron</keyword>
<keyword id="KW-0411">Iron-sulfur</keyword>
<keyword id="KW-0479">Metal-binding</keyword>
<keyword id="KW-0662">Pyridine nucleotide biosynthesis</keyword>
<keyword id="KW-0808">Transferase</keyword>
<proteinExistence type="inferred from homology"/>
<name>NADA_NEIM0</name>
<dbReference type="EC" id="2.5.1.72" evidence="1"/>
<dbReference type="EMBL" id="CP000381">
    <property type="protein sequence ID" value="ABX73891.1"/>
    <property type="molecule type" value="Genomic_DNA"/>
</dbReference>
<dbReference type="RefSeq" id="WP_002223409.1">
    <property type="nucleotide sequence ID" value="NC_010120.1"/>
</dbReference>
<dbReference type="SMR" id="A9M2J9"/>
<dbReference type="KEGG" id="nmn:NMCC_1750"/>
<dbReference type="HOGENOM" id="CLU_047382_1_0_4"/>
<dbReference type="UniPathway" id="UPA00253">
    <property type="reaction ID" value="UER00327"/>
</dbReference>
<dbReference type="Proteomes" id="UP000001177">
    <property type="component" value="Chromosome"/>
</dbReference>
<dbReference type="GO" id="GO:0005829">
    <property type="term" value="C:cytosol"/>
    <property type="evidence" value="ECO:0007669"/>
    <property type="project" value="TreeGrafter"/>
</dbReference>
<dbReference type="GO" id="GO:0051539">
    <property type="term" value="F:4 iron, 4 sulfur cluster binding"/>
    <property type="evidence" value="ECO:0007669"/>
    <property type="project" value="UniProtKB-KW"/>
</dbReference>
<dbReference type="GO" id="GO:0046872">
    <property type="term" value="F:metal ion binding"/>
    <property type="evidence" value="ECO:0007669"/>
    <property type="project" value="UniProtKB-KW"/>
</dbReference>
<dbReference type="GO" id="GO:0008987">
    <property type="term" value="F:quinolinate synthetase A activity"/>
    <property type="evidence" value="ECO:0007669"/>
    <property type="project" value="UniProtKB-UniRule"/>
</dbReference>
<dbReference type="GO" id="GO:0034628">
    <property type="term" value="P:'de novo' NAD biosynthetic process from L-aspartate"/>
    <property type="evidence" value="ECO:0007669"/>
    <property type="project" value="TreeGrafter"/>
</dbReference>
<dbReference type="FunFam" id="3.40.50.10800:FF:000001">
    <property type="entry name" value="Quinolinate synthase A"/>
    <property type="match status" value="1"/>
</dbReference>
<dbReference type="FunFam" id="3.40.50.10800:FF:000003">
    <property type="entry name" value="Quinolinate synthase A"/>
    <property type="match status" value="1"/>
</dbReference>
<dbReference type="Gene3D" id="3.40.50.10800">
    <property type="entry name" value="NadA-like"/>
    <property type="match status" value="3"/>
</dbReference>
<dbReference type="HAMAP" id="MF_00567">
    <property type="entry name" value="NadA_type1"/>
    <property type="match status" value="1"/>
</dbReference>
<dbReference type="InterPro" id="IPR003473">
    <property type="entry name" value="NadA"/>
</dbReference>
<dbReference type="InterPro" id="IPR036094">
    <property type="entry name" value="NadA_sf"/>
</dbReference>
<dbReference type="InterPro" id="IPR023513">
    <property type="entry name" value="Quinolinate_synth_A_type1"/>
</dbReference>
<dbReference type="NCBIfam" id="TIGR00550">
    <property type="entry name" value="nadA"/>
    <property type="match status" value="1"/>
</dbReference>
<dbReference type="NCBIfam" id="NF006877">
    <property type="entry name" value="PRK09375.1-1"/>
    <property type="match status" value="1"/>
</dbReference>
<dbReference type="NCBIfam" id="NF006878">
    <property type="entry name" value="PRK09375.1-2"/>
    <property type="match status" value="1"/>
</dbReference>
<dbReference type="PANTHER" id="PTHR30573:SF0">
    <property type="entry name" value="QUINOLINATE SYNTHASE, CHLOROPLASTIC"/>
    <property type="match status" value="1"/>
</dbReference>
<dbReference type="PANTHER" id="PTHR30573">
    <property type="entry name" value="QUINOLINATE SYNTHETASE A"/>
    <property type="match status" value="1"/>
</dbReference>
<dbReference type="Pfam" id="PF02445">
    <property type="entry name" value="NadA"/>
    <property type="match status" value="1"/>
</dbReference>
<dbReference type="SUPFAM" id="SSF142754">
    <property type="entry name" value="NadA-like"/>
    <property type="match status" value="1"/>
</dbReference>
<gene>
    <name evidence="1" type="primary">nadA</name>
    <name type="ordered locus">NMCC_1750</name>
</gene>
<feature type="chain" id="PRO_1000082312" description="Quinolinate synthase">
    <location>
        <begin position="1"/>
        <end position="370"/>
    </location>
</feature>
<feature type="binding site" evidence="1">
    <location>
        <position position="62"/>
    </location>
    <ligand>
        <name>iminosuccinate</name>
        <dbReference type="ChEBI" id="CHEBI:77875"/>
    </ligand>
</feature>
<feature type="binding site" evidence="1">
    <location>
        <position position="83"/>
    </location>
    <ligand>
        <name>iminosuccinate</name>
        <dbReference type="ChEBI" id="CHEBI:77875"/>
    </ligand>
</feature>
<feature type="binding site" evidence="1">
    <location>
        <position position="128"/>
    </location>
    <ligand>
        <name>[4Fe-4S] cluster</name>
        <dbReference type="ChEBI" id="CHEBI:49883"/>
    </ligand>
</feature>
<feature type="binding site" evidence="1">
    <location>
        <begin position="154"/>
        <end position="156"/>
    </location>
    <ligand>
        <name>iminosuccinate</name>
        <dbReference type="ChEBI" id="CHEBI:77875"/>
    </ligand>
</feature>
<feature type="binding site" evidence="1">
    <location>
        <position position="171"/>
    </location>
    <ligand>
        <name>iminosuccinate</name>
        <dbReference type="ChEBI" id="CHEBI:77875"/>
    </ligand>
</feature>
<feature type="binding site" evidence="1">
    <location>
        <position position="215"/>
    </location>
    <ligand>
        <name>[4Fe-4S] cluster</name>
        <dbReference type="ChEBI" id="CHEBI:49883"/>
    </ligand>
</feature>
<feature type="binding site" evidence="1">
    <location>
        <begin position="241"/>
        <end position="243"/>
    </location>
    <ligand>
        <name>iminosuccinate</name>
        <dbReference type="ChEBI" id="CHEBI:77875"/>
    </ligand>
</feature>
<feature type="binding site" evidence="1">
    <location>
        <position position="258"/>
    </location>
    <ligand>
        <name>iminosuccinate</name>
        <dbReference type="ChEBI" id="CHEBI:77875"/>
    </ligand>
</feature>
<feature type="binding site" evidence="1">
    <location>
        <position position="312"/>
    </location>
    <ligand>
        <name>[4Fe-4S] cluster</name>
        <dbReference type="ChEBI" id="CHEBI:49883"/>
    </ligand>
</feature>
<organism>
    <name type="scientific">Neisseria meningitidis serogroup C (strain 053442)</name>
    <dbReference type="NCBI Taxonomy" id="374833"/>
    <lineage>
        <taxon>Bacteria</taxon>
        <taxon>Pseudomonadati</taxon>
        <taxon>Pseudomonadota</taxon>
        <taxon>Betaproteobacteria</taxon>
        <taxon>Neisseriales</taxon>
        <taxon>Neisseriaceae</taxon>
        <taxon>Neisseria</taxon>
    </lineage>
</organism>
<protein>
    <recommendedName>
        <fullName evidence="1">Quinolinate synthase</fullName>
        <ecNumber evidence="1">2.5.1.72</ecNumber>
    </recommendedName>
</protein>
<evidence type="ECO:0000255" key="1">
    <source>
        <dbReference type="HAMAP-Rule" id="MF_00567"/>
    </source>
</evidence>
<accession>A9M2J9</accession>